<gene>
    <name type="primary">tapC</name>
</gene>
<dbReference type="EMBL" id="U20255">
    <property type="protein sequence ID" value="AAC43997.1"/>
    <property type="molecule type" value="Genomic_DNA"/>
</dbReference>
<dbReference type="PIR" id="S70874">
    <property type="entry name" value="S70874"/>
</dbReference>
<dbReference type="SMR" id="P45793"/>
<dbReference type="eggNOG" id="COG1459">
    <property type="taxonomic scope" value="Bacteria"/>
</dbReference>
<dbReference type="GO" id="GO:0005886">
    <property type="term" value="C:plasma membrane"/>
    <property type="evidence" value="ECO:0007669"/>
    <property type="project" value="UniProtKB-SubCell"/>
</dbReference>
<dbReference type="GO" id="GO:0015628">
    <property type="term" value="P:protein secretion by the type II secretion system"/>
    <property type="evidence" value="ECO:0007669"/>
    <property type="project" value="TreeGrafter"/>
</dbReference>
<dbReference type="FunFam" id="1.20.81.30:FF:000001">
    <property type="entry name" value="Type II secretion system protein F"/>
    <property type="match status" value="2"/>
</dbReference>
<dbReference type="Gene3D" id="1.20.81.30">
    <property type="entry name" value="Type II secretion system (T2SS), domain F"/>
    <property type="match status" value="2"/>
</dbReference>
<dbReference type="InterPro" id="IPR003004">
    <property type="entry name" value="GspF/PilC"/>
</dbReference>
<dbReference type="InterPro" id="IPR001992">
    <property type="entry name" value="T2SS_GspF/T4SS_PilC_CS"/>
</dbReference>
<dbReference type="InterPro" id="IPR018076">
    <property type="entry name" value="T2SS_GspF_dom"/>
</dbReference>
<dbReference type="InterPro" id="IPR042094">
    <property type="entry name" value="T2SS_GspF_sf"/>
</dbReference>
<dbReference type="PANTHER" id="PTHR30012">
    <property type="entry name" value="GENERAL SECRETION PATHWAY PROTEIN"/>
    <property type="match status" value="1"/>
</dbReference>
<dbReference type="PANTHER" id="PTHR30012:SF7">
    <property type="entry name" value="PROTEIN TRANSPORT PROTEIN HOFC HOMOLOG"/>
    <property type="match status" value="1"/>
</dbReference>
<dbReference type="Pfam" id="PF00482">
    <property type="entry name" value="T2SSF"/>
    <property type="match status" value="2"/>
</dbReference>
<dbReference type="PRINTS" id="PR00812">
    <property type="entry name" value="BCTERIALGSPF"/>
</dbReference>
<dbReference type="PROSITE" id="PS00874">
    <property type="entry name" value="T2SP_F"/>
    <property type="match status" value="1"/>
</dbReference>
<accession>P45793</accession>
<proteinExistence type="inferred from homology"/>
<feature type="chain" id="PRO_0000207843" description="Type IV pilus assembly protein TapC">
    <location>
        <begin position="1"/>
        <end position="413"/>
    </location>
</feature>
<feature type="transmembrane region" description="Helical" evidence="1">
    <location>
        <begin position="180"/>
        <end position="200"/>
    </location>
</feature>
<feature type="transmembrane region" description="Helical" evidence="1">
    <location>
        <begin position="227"/>
        <end position="247"/>
    </location>
</feature>
<feature type="transmembrane region" description="Helical" evidence="1">
    <location>
        <begin position="286"/>
        <end position="306"/>
    </location>
</feature>
<feature type="transmembrane region" description="Helical" evidence="1">
    <location>
        <begin position="386"/>
        <end position="406"/>
    </location>
</feature>
<comment type="function">
    <text>Involved in the translocation of the type IV pilin.</text>
</comment>
<comment type="subcellular location">
    <subcellularLocation>
        <location evidence="2">Cell inner membrane</location>
        <topology evidence="2">Multi-pass membrane protein</topology>
    </subcellularLocation>
</comment>
<comment type="similarity">
    <text evidence="2">Belongs to the GSP F family.</text>
</comment>
<keyword id="KW-0997">Cell inner membrane</keyword>
<keyword id="KW-1003">Cell membrane</keyword>
<keyword id="KW-1029">Fimbrium biogenesis</keyword>
<keyword id="KW-0472">Membrane</keyword>
<keyword id="KW-0653">Protein transport</keyword>
<keyword id="KW-0812">Transmembrane</keyword>
<keyword id="KW-1133">Transmembrane helix</keyword>
<keyword id="KW-0813">Transport</keyword>
<protein>
    <recommendedName>
        <fullName>Type IV pilus assembly protein TapC</fullName>
    </recommendedName>
</protein>
<sequence>MATLTQKQNAPKKVFAFRWSGVNRKGQKVSGELQADSINTVKAELRKQGVNVTKVSKKSQGLFSKGGAKIKPMDIAIVSRQITTMLSAGVPLVQSLQIIARSHEKASMRELMGQIAADVETGTPMSEALRRHPRHFDALYCDLVEAGEQSGALETIYDRIATYREKSEALKSKIKKAMFYPAMVILVAIVVTSILLLFVIPQFEDIFKSFGAELPIFTQFVIGISRFMQHWWYVIFGGTAFAIFLYVRAWRASQKVKDNTDKFILTIPVVGMILHKAAMARFARTLSTTFSAGIPLVDALISAAGASGNYVYRTAVMAIRNEVVAGMQINVAMRTVDLFPDMVIQMVMIGEESGAIDDMLSKVATIFEQEVDDLVDGLTSLLEPLIMVVLGVLVGGMVVAMYLPIFKLGDLVG</sequence>
<evidence type="ECO:0000255" key="1"/>
<evidence type="ECO:0000305" key="2"/>
<reference key="1">
    <citation type="journal article" date="1996" name="Mol. Microbiol.">
        <title>Cloning of an Aeromonas hydrophila type IV pilus biogenesis gene cluster: complementation of pilus assembly functions and characterization of a type IV leader peptidase/N-methyltransferase required for extracellular protein secretion.</title>
        <authorList>
            <person name="Pepe C.M."/>
            <person name="Eklund M.W."/>
            <person name="Strom M.S."/>
        </authorList>
    </citation>
    <scope>NUCLEOTIDE SEQUENCE [GENOMIC DNA]</scope>
    <source>
        <strain>Ah65</strain>
    </source>
</reference>
<organism>
    <name type="scientific">Aeromonas hydrophila</name>
    <dbReference type="NCBI Taxonomy" id="644"/>
    <lineage>
        <taxon>Bacteria</taxon>
        <taxon>Pseudomonadati</taxon>
        <taxon>Pseudomonadota</taxon>
        <taxon>Gammaproteobacteria</taxon>
        <taxon>Aeromonadales</taxon>
        <taxon>Aeromonadaceae</taxon>
        <taxon>Aeromonas</taxon>
    </lineage>
</organism>
<name>TAPC_AERHY</name>